<feature type="signal peptide" evidence="2">
    <location>
        <begin position="1"/>
        <end position="24"/>
    </location>
</feature>
<feature type="propeptide" id="PRO_0000023224" evidence="12">
    <location>
        <begin position="25"/>
        <end position="34"/>
    </location>
</feature>
<feature type="chain" id="PRO_0000023225" description="Parathyroid hormone-related protein">
    <location>
        <begin position="37"/>
        <end position="177"/>
    </location>
</feature>
<feature type="peptide" id="PRO_0000023226" description="PTHrP[1-36]" evidence="17">
    <location>
        <begin position="37"/>
        <end position="72"/>
    </location>
</feature>
<feature type="peptide" id="PRO_0000023227" description="PTHrP[38-94]" evidence="17">
    <location>
        <begin position="74"/>
        <end position="130"/>
    </location>
</feature>
<feature type="peptide" id="PRO_0000023228" description="Osteostatin" evidence="17">
    <location>
        <begin position="143"/>
        <end position="175"/>
    </location>
</feature>
<feature type="region of interest" description="Important for receptor binding" evidence="9">
    <location>
        <begin position="57"/>
        <end position="68"/>
    </location>
</feature>
<feature type="region of interest" description="Disordered" evidence="3">
    <location>
        <begin position="74"/>
        <end position="177"/>
    </location>
</feature>
<feature type="short sequence motif" description="Nuclear localization signal" evidence="4">
    <location>
        <begin position="108"/>
        <end position="129"/>
    </location>
</feature>
<feature type="compositionally biased region" description="Polar residues" evidence="3">
    <location>
        <begin position="76"/>
        <end position="90"/>
    </location>
</feature>
<feature type="compositionally biased region" description="Basic and acidic residues" evidence="3">
    <location>
        <begin position="109"/>
        <end position="118"/>
    </location>
</feature>
<feature type="compositionally biased region" description="Basic residues" evidence="3">
    <location>
        <begin position="122"/>
        <end position="132"/>
    </location>
</feature>
<feature type="splice variant" id="VSP_004534" description="In isoform 2." evidence="18 21">
    <location>
        <begin position="176"/>
        <end position="177"/>
    </location>
</feature>
<feature type="splice variant" id="VSP_004535" description="In isoform 3." evidence="23">
    <original>RH</original>
    <variation>TALLWGLKKKKENNRRTHHMQLMISLFKSPLLLL</variation>
    <location>
        <begin position="176"/>
        <end position="177"/>
    </location>
</feature>
<feature type="sequence variant" id="VAR_063711" description="In BDE2; dbSNP:rs267606986." evidence="10">
    <original>L</original>
    <variation>P</variation>
    <location>
        <position position="44"/>
    </location>
</feature>
<feature type="sequence variant" id="VAR_063712" description="In BDE2; dbSNP:rs267606985." evidence="10">
    <original>L</original>
    <variation>P</variation>
    <location>
        <position position="60"/>
    </location>
</feature>
<feature type="sequence variant" id="VAR_036433" description="In a breast cancer sample; somatic mutation." evidence="6">
    <original>S</original>
    <variation>T</variation>
    <location>
        <position position="169"/>
    </location>
</feature>
<feature type="mutagenesis site" description="Strongly reduced affinity for PTH1R." evidence="9">
    <original>R</original>
    <variation>A</variation>
    <location>
        <position position="57"/>
    </location>
</feature>
<feature type="mutagenesis site" description="Reduced affinity for PTH1R." evidence="9">
    <original>F</original>
    <variation>A</variation>
    <location>
        <position position="59"/>
    </location>
</feature>
<feature type="mutagenesis site" description="Strongly reduced affinity for PTH1R." evidence="9">
    <original>L</original>
    <variation>A</variation>
    <variation>K</variation>
    <location>
        <position position="60"/>
    </location>
</feature>
<feature type="mutagenesis site" description="Reduced affinity for PTH1R." evidence="9">
    <original>L</original>
    <variation>A</variation>
    <location>
        <position position="63"/>
    </location>
</feature>
<feature type="mutagenesis site" description="Reduced affinity for PTH1R." evidence="9">
    <original>I</original>
    <variation>A</variation>
    <location>
        <position position="64"/>
    </location>
</feature>
<feature type="mutagenesis site" description="Reduced affinity for PTH1R." evidence="9">
    <original>H</original>
    <variation>A</variation>
    <location>
        <position position="68"/>
    </location>
</feature>
<feature type="strand" evidence="28">
    <location>
        <begin position="39"/>
        <end position="41"/>
    </location>
</feature>
<feature type="helix" evidence="27">
    <location>
        <begin position="52"/>
        <end position="67"/>
    </location>
</feature>
<feature type="helix" evidence="28">
    <location>
        <begin position="69"/>
        <end position="71"/>
    </location>
</feature>
<feature type="strand" evidence="26">
    <location>
        <begin position="114"/>
        <end position="116"/>
    </location>
</feature>
<feature type="helix" evidence="26">
    <location>
        <begin position="117"/>
        <end position="119"/>
    </location>
</feature>
<dbReference type="EMBL" id="M17183">
    <property type="protein sequence ID" value="AAA60221.1"/>
    <property type="molecule type" value="Genomic_DNA"/>
</dbReference>
<dbReference type="EMBL" id="X14304">
    <property type="protein sequence ID" value="CAA32480.1"/>
    <property type="molecule type" value="Genomic_DNA"/>
</dbReference>
<dbReference type="EMBL" id="J03580">
    <property type="protein sequence ID" value="AAA60216.1"/>
    <property type="status" value="ALT_SEQ"/>
    <property type="molecule type" value="mRNA"/>
</dbReference>
<dbReference type="EMBL" id="M24349">
    <property type="protein sequence ID" value="AAA60358.1"/>
    <property type="molecule type" value="Genomic_DNA"/>
</dbReference>
<dbReference type="EMBL" id="M24348">
    <property type="protein sequence ID" value="AAA60358.1"/>
    <property type="status" value="JOINED"/>
    <property type="molecule type" value="Genomic_DNA"/>
</dbReference>
<dbReference type="EMBL" id="M24350">
    <property type="protein sequence ID" value="AAA60359.1"/>
    <property type="molecule type" value="Genomic_DNA"/>
</dbReference>
<dbReference type="EMBL" id="M24348">
    <property type="protein sequence ID" value="AAA60359.1"/>
    <property type="status" value="JOINED"/>
    <property type="molecule type" value="Genomic_DNA"/>
</dbReference>
<dbReference type="EMBL" id="M24349">
    <property type="protein sequence ID" value="AAA60359.1"/>
    <property type="status" value="JOINED"/>
    <property type="molecule type" value="Genomic_DNA"/>
</dbReference>
<dbReference type="EMBL" id="M24351">
    <property type="protein sequence ID" value="AAA60360.1"/>
    <property type="molecule type" value="Genomic_DNA"/>
</dbReference>
<dbReference type="EMBL" id="M24348">
    <property type="protein sequence ID" value="AAA60360.1"/>
    <property type="status" value="JOINED"/>
    <property type="molecule type" value="Genomic_DNA"/>
</dbReference>
<dbReference type="EMBL" id="M24349">
    <property type="protein sequence ID" value="AAA60360.1"/>
    <property type="status" value="JOINED"/>
    <property type="molecule type" value="Genomic_DNA"/>
</dbReference>
<dbReference type="EMBL" id="CR541882">
    <property type="protein sequence ID" value="CAG46680.1"/>
    <property type="molecule type" value="mRNA"/>
</dbReference>
<dbReference type="EMBL" id="CH471094">
    <property type="protein sequence ID" value="EAW96573.1"/>
    <property type="molecule type" value="Genomic_DNA"/>
</dbReference>
<dbReference type="EMBL" id="BC005961">
    <property type="protein sequence ID" value="AAH05961.1"/>
    <property type="molecule type" value="mRNA"/>
</dbReference>
<dbReference type="EMBL" id="J03802">
    <property type="protein sequence ID" value="AAA60218.1"/>
    <property type="molecule type" value="mRNA"/>
</dbReference>
<dbReference type="EMBL" id="M34071">
    <property type="protein sequence ID" value="AAA60217.1"/>
    <property type="molecule type" value="mRNA"/>
</dbReference>
<dbReference type="CCDS" id="CCDS44853.1">
    <molecule id="P12272-1"/>
</dbReference>
<dbReference type="CCDS" id="CCDS8715.1">
    <molecule id="P12272-2"/>
</dbReference>
<dbReference type="PIR" id="A33360">
    <property type="entry name" value="PTHU2L"/>
</dbReference>
<dbReference type="PIR" id="C33360">
    <property type="entry name" value="PTHU3L"/>
</dbReference>
<dbReference type="RefSeq" id="NP_002811.1">
    <molecule id="P12272-2"/>
    <property type="nucleotide sequence ID" value="NM_002820.3"/>
</dbReference>
<dbReference type="RefSeq" id="NP_945315.1">
    <molecule id="P12272-2"/>
    <property type="nucleotide sequence ID" value="NM_198964.2"/>
</dbReference>
<dbReference type="RefSeq" id="NP_945316.1">
    <molecule id="P12272-1"/>
    <property type="nucleotide sequence ID" value="NM_198965.2"/>
</dbReference>
<dbReference type="RefSeq" id="NP_945317.1">
    <molecule id="P12272-1"/>
    <property type="nucleotide sequence ID" value="NM_198966.2"/>
</dbReference>
<dbReference type="RefSeq" id="XP_011519076.1">
    <property type="nucleotide sequence ID" value="XM_011520774.2"/>
</dbReference>
<dbReference type="RefSeq" id="XP_011519077.1">
    <property type="nucleotide sequence ID" value="XM_011520775.2"/>
</dbReference>
<dbReference type="RefSeq" id="XP_016875163.1">
    <property type="nucleotide sequence ID" value="XM_017019674.1"/>
</dbReference>
<dbReference type="RefSeq" id="XP_016875164.1">
    <molecule id="P12272-1"/>
    <property type="nucleotide sequence ID" value="XM_017019675.2"/>
</dbReference>
<dbReference type="RefSeq" id="XP_047285134.1">
    <molecule id="P12272-1"/>
    <property type="nucleotide sequence ID" value="XM_047429178.1"/>
</dbReference>
<dbReference type="RefSeq" id="XP_047285135.1">
    <molecule id="P12272-1"/>
    <property type="nucleotide sequence ID" value="XM_047429179.1"/>
</dbReference>
<dbReference type="RefSeq" id="XP_054228585.1">
    <molecule id="P12272-1"/>
    <property type="nucleotide sequence ID" value="XM_054372610.1"/>
</dbReference>
<dbReference type="RefSeq" id="XP_054228586.1">
    <molecule id="P12272-1"/>
    <property type="nucleotide sequence ID" value="XM_054372611.1"/>
</dbReference>
<dbReference type="RefSeq" id="XP_054228587.1">
    <molecule id="P12272-1"/>
    <property type="nucleotide sequence ID" value="XM_054372612.1"/>
</dbReference>
<dbReference type="PDB" id="1BZG">
    <property type="method" value="NMR"/>
    <property type="chains" value="A=37-70"/>
</dbReference>
<dbReference type="PDB" id="1M5N">
    <property type="method" value="X-ray"/>
    <property type="resolution" value="2.90 A"/>
    <property type="chains" value="Q=103-130"/>
</dbReference>
<dbReference type="PDB" id="3FFD">
    <property type="method" value="X-ray"/>
    <property type="resolution" value="2.00 A"/>
    <property type="chains" value="P=37-144"/>
</dbReference>
<dbReference type="PDB" id="3H3G">
    <property type="method" value="X-ray"/>
    <property type="resolution" value="1.94 A"/>
    <property type="chains" value="B=48-70"/>
</dbReference>
<dbReference type="PDB" id="7UZO">
    <property type="method" value="X-ray"/>
    <property type="resolution" value="1.30 A"/>
    <property type="chains" value="B=51-72"/>
</dbReference>
<dbReference type="PDB" id="7UZP">
    <property type="method" value="X-ray"/>
    <property type="resolution" value="2.29 A"/>
    <property type="chains" value="B/D/F=52-72"/>
</dbReference>
<dbReference type="PDB" id="7VVJ">
    <property type="method" value="EM"/>
    <property type="resolution" value="3.20 A"/>
    <property type="chains" value="P=37-72"/>
</dbReference>
<dbReference type="PDB" id="8D51">
    <property type="method" value="X-ray"/>
    <property type="resolution" value="2.00 A"/>
    <property type="chains" value="B=51-72"/>
</dbReference>
<dbReference type="PDB" id="8D52">
    <property type="method" value="X-ray"/>
    <property type="resolution" value="2.02 A"/>
    <property type="chains" value="B=51-72"/>
</dbReference>
<dbReference type="PDB" id="8FLR">
    <property type="method" value="EM"/>
    <property type="resolution" value="2.94 A"/>
    <property type="chains" value="P=37-72"/>
</dbReference>
<dbReference type="PDB" id="8HAF">
    <property type="method" value="EM"/>
    <property type="resolution" value="3.25 A"/>
    <property type="chains" value="P=37-72"/>
</dbReference>
<dbReference type="PDBsum" id="1BZG"/>
<dbReference type="PDBsum" id="1M5N"/>
<dbReference type="PDBsum" id="3FFD"/>
<dbReference type="PDBsum" id="3H3G"/>
<dbReference type="PDBsum" id="7UZO"/>
<dbReference type="PDBsum" id="7UZP"/>
<dbReference type="PDBsum" id="7VVJ"/>
<dbReference type="PDBsum" id="8D51"/>
<dbReference type="PDBsum" id="8D52"/>
<dbReference type="PDBsum" id="8FLR"/>
<dbReference type="PDBsum" id="8HAF"/>
<dbReference type="BMRB" id="P12272"/>
<dbReference type="EMDB" id="EMD-29284"/>
<dbReference type="EMDB" id="EMD-32141"/>
<dbReference type="EMDB" id="EMD-34587"/>
<dbReference type="SMR" id="P12272"/>
<dbReference type="BioGRID" id="111716">
    <property type="interactions" value="17"/>
</dbReference>
<dbReference type="FunCoup" id="P12272">
    <property type="interactions" value="911"/>
</dbReference>
<dbReference type="IntAct" id="P12272">
    <property type="interactions" value="3"/>
</dbReference>
<dbReference type="MINT" id="P12272"/>
<dbReference type="STRING" id="9606.ENSP00000441765"/>
<dbReference type="ChEMBL" id="CHEMBL3712869"/>
<dbReference type="GlyCosmos" id="P12272">
    <property type="glycosylation" value="1 site, 1 glycan"/>
</dbReference>
<dbReference type="GlyGen" id="P12272">
    <property type="glycosylation" value="3 sites, 2 O-linked glycans (3 sites)"/>
</dbReference>
<dbReference type="iPTMnet" id="P12272"/>
<dbReference type="PhosphoSitePlus" id="P12272"/>
<dbReference type="BioMuta" id="PTHLH"/>
<dbReference type="DMDM" id="131542"/>
<dbReference type="MassIVE" id="P12272"/>
<dbReference type="PaxDb" id="9606-ENSP00000441765"/>
<dbReference type="PeptideAtlas" id="P12272"/>
<dbReference type="ProteomicsDB" id="52842">
    <molecule id="P12272-1"/>
</dbReference>
<dbReference type="ProteomicsDB" id="52843">
    <molecule id="P12272-2"/>
</dbReference>
<dbReference type="ProteomicsDB" id="52844">
    <molecule id="P12272-3"/>
</dbReference>
<dbReference type="ABCD" id="P12272">
    <property type="antibodies" value="4 sequenced antibodies"/>
</dbReference>
<dbReference type="Antibodypedia" id="3662">
    <property type="antibodies" value="455 antibodies from 37 providers"/>
</dbReference>
<dbReference type="CPTC" id="P12272">
    <property type="antibodies" value="2 antibodies"/>
</dbReference>
<dbReference type="DNASU" id="5744"/>
<dbReference type="Ensembl" id="ENST00000201015.8">
    <molecule id="P12272-2"/>
    <property type="protein sequence ID" value="ENSP00000201015.4"/>
    <property type="gene ID" value="ENSG00000087494.16"/>
</dbReference>
<dbReference type="Ensembl" id="ENST00000395868.7">
    <molecule id="P12272-2"/>
    <property type="protein sequence ID" value="ENSP00000379209.3"/>
    <property type="gene ID" value="ENSG00000087494.16"/>
</dbReference>
<dbReference type="Ensembl" id="ENST00000395872.5">
    <molecule id="P12272-1"/>
    <property type="protein sequence ID" value="ENSP00000379213.1"/>
    <property type="gene ID" value="ENSG00000087494.16"/>
</dbReference>
<dbReference type="Ensembl" id="ENST00000535992.5">
    <molecule id="P12272-2"/>
    <property type="protein sequence ID" value="ENSP00000440613.1"/>
    <property type="gene ID" value="ENSG00000087494.16"/>
</dbReference>
<dbReference type="Ensembl" id="ENST00000538310.1">
    <molecule id="P12272-3"/>
    <property type="protein sequence ID" value="ENSP00000441890.1"/>
    <property type="gene ID" value="ENSG00000087494.16"/>
</dbReference>
<dbReference type="Ensembl" id="ENST00000539239.5">
    <molecule id="P12272-1"/>
    <property type="protein sequence ID" value="ENSP00000441571.1"/>
    <property type="gene ID" value="ENSG00000087494.16"/>
</dbReference>
<dbReference type="Ensembl" id="ENST00000545234.6">
    <molecule id="P12272-1"/>
    <property type="protein sequence ID" value="ENSP00000441765.1"/>
    <property type="gene ID" value="ENSG00000087494.16"/>
</dbReference>
<dbReference type="GeneID" id="5744"/>
<dbReference type="KEGG" id="hsa:5744"/>
<dbReference type="MANE-Select" id="ENST00000545234.6">
    <property type="protein sequence ID" value="ENSP00000441765.1"/>
    <property type="RefSeq nucleotide sequence ID" value="NM_198965.2"/>
    <property type="RefSeq protein sequence ID" value="NP_945316.1"/>
</dbReference>
<dbReference type="UCSC" id="uc001ril.4">
    <molecule id="P12272-1"/>
    <property type="organism name" value="human"/>
</dbReference>
<dbReference type="AGR" id="HGNC:9607"/>
<dbReference type="CTD" id="5744"/>
<dbReference type="DisGeNET" id="5744"/>
<dbReference type="GeneCards" id="PTHLH"/>
<dbReference type="HGNC" id="HGNC:9607">
    <property type="gene designation" value="PTHLH"/>
</dbReference>
<dbReference type="HPA" id="ENSG00000087494">
    <property type="expression patterns" value="Tissue enhanced (parathyroid)"/>
</dbReference>
<dbReference type="MalaCards" id="PTHLH"/>
<dbReference type="MIM" id="168470">
    <property type="type" value="gene"/>
</dbReference>
<dbReference type="MIM" id="613382">
    <property type="type" value="phenotype"/>
</dbReference>
<dbReference type="neXtProt" id="NX_P12272"/>
<dbReference type="OpenTargets" id="ENSG00000087494"/>
<dbReference type="Orphanet" id="93387">
    <property type="disease" value="Brachydactyly type E"/>
</dbReference>
<dbReference type="PharmGKB" id="PA33952"/>
<dbReference type="VEuPathDB" id="HostDB:ENSG00000087494"/>
<dbReference type="eggNOG" id="ENOG502S3J9">
    <property type="taxonomic scope" value="Eukaryota"/>
</dbReference>
<dbReference type="GeneTree" id="ENSGT00390000004933"/>
<dbReference type="InParanoid" id="P12272"/>
<dbReference type="OMA" id="TTHDHNL"/>
<dbReference type="OrthoDB" id="9892514at2759"/>
<dbReference type="PAN-GO" id="P12272">
    <property type="GO annotations" value="5 GO annotations based on evolutionary models"/>
</dbReference>
<dbReference type="PhylomeDB" id="P12272"/>
<dbReference type="TreeFam" id="TF332953"/>
<dbReference type="PathwayCommons" id="P12272"/>
<dbReference type="Reactome" id="R-HSA-373080">
    <property type="pathway name" value="Class B/2 (Secretin family receptors)"/>
</dbReference>
<dbReference type="Reactome" id="R-HSA-418555">
    <property type="pathway name" value="G alpha (s) signalling events"/>
</dbReference>
<dbReference type="SignaLink" id="P12272"/>
<dbReference type="SIGNOR" id="P12272"/>
<dbReference type="BioGRID-ORCS" id="5744">
    <property type="hits" value="8 hits in 1156 CRISPR screens"/>
</dbReference>
<dbReference type="EvolutionaryTrace" id="P12272"/>
<dbReference type="GeneWiki" id="Parathyroid_hormone-related_protein"/>
<dbReference type="GenomeRNAi" id="5744"/>
<dbReference type="Pharos" id="P12272">
    <property type="development level" value="Tbio"/>
</dbReference>
<dbReference type="PRO" id="PR:P12272"/>
<dbReference type="Proteomes" id="UP000005640">
    <property type="component" value="Chromosome 12"/>
</dbReference>
<dbReference type="RNAct" id="P12272">
    <property type="molecule type" value="protein"/>
</dbReference>
<dbReference type="Bgee" id="ENSG00000087494">
    <property type="expression patterns" value="Expressed in periodontal ligament and 140 other cell types or tissues"/>
</dbReference>
<dbReference type="ExpressionAtlas" id="P12272">
    <property type="expression patterns" value="baseline and differential"/>
</dbReference>
<dbReference type="GO" id="GO:0005737">
    <property type="term" value="C:cytoplasm"/>
    <property type="evidence" value="ECO:0000304"/>
    <property type="project" value="ProtInc"/>
</dbReference>
<dbReference type="GO" id="GO:0005829">
    <property type="term" value="C:cytosol"/>
    <property type="evidence" value="ECO:0000314"/>
    <property type="project" value="HPA"/>
</dbReference>
<dbReference type="GO" id="GO:0005576">
    <property type="term" value="C:extracellular region"/>
    <property type="evidence" value="ECO:0000304"/>
    <property type="project" value="Reactome"/>
</dbReference>
<dbReference type="GO" id="GO:0005615">
    <property type="term" value="C:extracellular space"/>
    <property type="evidence" value="ECO:0000304"/>
    <property type="project" value="ProtInc"/>
</dbReference>
<dbReference type="GO" id="GO:0005794">
    <property type="term" value="C:Golgi apparatus"/>
    <property type="evidence" value="ECO:0000314"/>
    <property type="project" value="HPA"/>
</dbReference>
<dbReference type="GO" id="GO:0005654">
    <property type="term" value="C:nucleoplasm"/>
    <property type="evidence" value="ECO:0000314"/>
    <property type="project" value="HPA"/>
</dbReference>
<dbReference type="GO" id="GO:0005179">
    <property type="term" value="F:hormone activity"/>
    <property type="evidence" value="ECO:0000318"/>
    <property type="project" value="GO_Central"/>
</dbReference>
<dbReference type="GO" id="GO:0051428">
    <property type="term" value="F:peptide hormone receptor binding"/>
    <property type="evidence" value="ECO:0000314"/>
    <property type="project" value="UniProtKB"/>
</dbReference>
<dbReference type="GO" id="GO:0007189">
    <property type="term" value="P:adenylate cyclase-activating G protein-coupled receptor signaling pathway"/>
    <property type="evidence" value="ECO:0000314"/>
    <property type="project" value="MGI"/>
</dbReference>
<dbReference type="GO" id="GO:0030282">
    <property type="term" value="P:bone mineralization"/>
    <property type="evidence" value="ECO:0007669"/>
    <property type="project" value="InterPro"/>
</dbReference>
<dbReference type="GO" id="GO:0046058">
    <property type="term" value="P:cAMP metabolic process"/>
    <property type="evidence" value="ECO:0000304"/>
    <property type="project" value="ProtInc"/>
</dbReference>
<dbReference type="GO" id="GO:0007267">
    <property type="term" value="P:cell-cell signaling"/>
    <property type="evidence" value="ECO:0000304"/>
    <property type="project" value="ProtInc"/>
</dbReference>
<dbReference type="GO" id="GO:0008544">
    <property type="term" value="P:epidermis development"/>
    <property type="evidence" value="ECO:0000304"/>
    <property type="project" value="ProtInc"/>
</dbReference>
<dbReference type="GO" id="GO:0007565">
    <property type="term" value="P:female pregnancy"/>
    <property type="evidence" value="ECO:0000304"/>
    <property type="project" value="ProtInc"/>
</dbReference>
<dbReference type="GO" id="GO:0008285">
    <property type="term" value="P:negative regulation of cell population proliferation"/>
    <property type="evidence" value="ECO:0000304"/>
    <property type="project" value="ProtInc"/>
</dbReference>
<dbReference type="GO" id="GO:0061182">
    <property type="term" value="P:negative regulation of chondrocyte development"/>
    <property type="evidence" value="ECO:0000314"/>
    <property type="project" value="MGI"/>
</dbReference>
<dbReference type="GO" id="GO:0032331">
    <property type="term" value="P:negative regulation of chondrocyte differentiation"/>
    <property type="evidence" value="ECO:0000314"/>
    <property type="project" value="MGI"/>
</dbReference>
<dbReference type="GO" id="GO:0002076">
    <property type="term" value="P:osteoblast development"/>
    <property type="evidence" value="ECO:0000318"/>
    <property type="project" value="GO_Central"/>
</dbReference>
<dbReference type="GO" id="GO:0008284">
    <property type="term" value="P:positive regulation of cell population proliferation"/>
    <property type="evidence" value="ECO:0000304"/>
    <property type="project" value="ProtInc"/>
</dbReference>
<dbReference type="GO" id="GO:0032330">
    <property type="term" value="P:regulation of chondrocyte differentiation"/>
    <property type="evidence" value="ECO:0000318"/>
    <property type="project" value="GO_Central"/>
</dbReference>
<dbReference type="GO" id="GO:0010468">
    <property type="term" value="P:regulation of gene expression"/>
    <property type="evidence" value="ECO:0000314"/>
    <property type="project" value="MGI"/>
</dbReference>
<dbReference type="GO" id="GO:0001501">
    <property type="term" value="P:skeletal system development"/>
    <property type="evidence" value="ECO:0000314"/>
    <property type="project" value="MGI"/>
</dbReference>
<dbReference type="DisProt" id="DP00138"/>
<dbReference type="IDEAL" id="IID00194"/>
<dbReference type="InterPro" id="IPR003626">
    <property type="entry name" value="PTH-rel"/>
</dbReference>
<dbReference type="InterPro" id="IPR001415">
    <property type="entry name" value="PTH/PTH-rel"/>
</dbReference>
<dbReference type="PANTHER" id="PTHR17223">
    <property type="entry name" value="PARATHYROID HORMONE-RELATED"/>
    <property type="match status" value="1"/>
</dbReference>
<dbReference type="PANTHER" id="PTHR17223:SF0">
    <property type="entry name" value="PARATHYROID HORMONE-RELATED PROTEIN"/>
    <property type="match status" value="1"/>
</dbReference>
<dbReference type="Pfam" id="PF01279">
    <property type="entry name" value="Parathyroid"/>
    <property type="match status" value="1"/>
</dbReference>
<dbReference type="SMART" id="SM00087">
    <property type="entry name" value="PTH"/>
    <property type="match status" value="1"/>
</dbReference>
<dbReference type="PROSITE" id="PS00335">
    <property type="entry name" value="PARATHYROID"/>
    <property type="match status" value="1"/>
</dbReference>
<comment type="function">
    <text evidence="1 9 11 13 14 17">Neuroendocrine peptide which is a critical regulator of cellular and organ growth, development, migration, differentiation and survival and of epithelial calcium ion transport (PubMed:12538599, PubMed:35932760, PubMed:3616618). Acts by binding to its receptor, PTH1R, activating G protein-coupled receptor signaling (PubMed:19674967, PubMed:35932760). Regulates endochondral bone development and epithelial-mesenchymal interactions during the formation of the mammary glands and teeth (By similarity). Required for skeletal homeostasis (PubMed:12538599). Promotes mammary mesenchyme differentiation and bud outgrowth by modulating mesenchymal cell responsiveness to BMPs (PubMed:12538599). Up-regulates BMPR1A expression in the mammary mesenchyme and this increases the sensitivity of these cells to BMPs and allows them to respond to BMP4 in a paracrine and/or autocrine fashion (By similarity). BMP4 signaling in the mesenchyme, in turn, triggers epithelial outgrowth and augments MSX2 expression, which causes the mammary mesenchyme to inhibit hair follicle formation within the nipple sheath (By similarity). Promotes colon cancer cell migration and invasion in an integrin alpha-6/beta-1-dependent manner through activation of Rac1 (PubMed:20637541).</text>
</comment>
<comment type="function">
    <molecule>Osteostatin</molecule>
    <text evidence="7 8 11 15 16">Potent inhibitor of osteoclastic bone resorption.</text>
</comment>
<comment type="subunit">
    <text evidence="9 13">Interacts with PTH1R (via N-terminal extracellular domain).</text>
</comment>
<comment type="interaction">
    <interactant intactId="EBI-2372758">
        <id>P12272</id>
    </interactant>
    <interactant intactId="EBI-2860297">
        <id>Q03431</id>
        <label>PTH1R</label>
    </interactant>
    <organismsDiffer>false</organismsDiffer>
    <experiments>4</experiments>
</comment>
<comment type="subcellular location">
    <subcellularLocation>
        <location evidence="14">Secreted</location>
    </subcellularLocation>
    <subcellularLocation>
        <location evidence="5">Cytoplasm</location>
    </subcellularLocation>
    <subcellularLocation>
        <location evidence="5">Nucleus</location>
    </subcellularLocation>
</comment>
<comment type="alternative products">
    <event type="alternative splicing"/>
    <isoform>
        <id>P12272-1</id>
        <name>1</name>
        <sequence type="displayed"/>
    </isoform>
    <isoform>
        <id>P12272-2</id>
        <name>2</name>
        <sequence type="described" ref="VSP_004534"/>
    </isoform>
    <isoform>
        <id>P12272-3</id>
        <name>3</name>
        <sequence type="described" ref="VSP_004535"/>
    </isoform>
    <text>Additional isoforms seem to exist.</text>
</comment>
<comment type="tissue specificity">
    <text>Ubiquitous. Also expressed in the mammary gland.</text>
</comment>
<comment type="PTM">
    <text evidence="17">There are 3 principal secretory forms, called PTHrP[1-36], PTHrP[38-94], and osteostatin (PTHrP[107-139]) arising from endoproteolytic cleavage of the initial translation product. Each of these secretory forms is believed to have one or more of its own receptors that mediates the normal paracrine, autocrine and endocrine actions.</text>
</comment>
<comment type="disease" evidence="10">
    <disease id="DI-02711">
        <name>Brachydactyly E2</name>
        <acronym>BDE2</acronym>
        <description>A form of brachydactyly. Brachydactyly defines a group of inherited malformations characterized by shortening of the digits due to abnormal development of the phalanges and/or the metacarpals. Brachydactyly type E is characterized by shortening of the fingers mainly in the metacarpals and metatarsals. Wide variability in the number of digits affected occurs from person to person, even in the same family. Some individuals are moderately short of stature. In brachydactyly type E2 variable combinations of metacarpals are involved, with shortening also of the first and third distal and the second and fifth middle phalanges.</description>
        <dbReference type="MIM" id="613382"/>
    </disease>
    <text>The disease is caused by variants affecting the gene represented in this entry.</text>
</comment>
<comment type="similarity">
    <text evidence="23">Belongs to the parathyroid hormone family.</text>
</comment>
<comment type="online information" name="Atlas of Genetics and Cytogenetics in Oncology and Haematology">
    <link uri="https://atlasgeneticsoncology.org/gene/41897/PTHLH"/>
</comment>
<accession>P12272</accession>
<accession>Q15251</accession>
<accession>Q6FH74</accession>
<proteinExistence type="evidence at protein level"/>
<sequence length="177" mass="20194">MQRRLVQQWSVAVFLLSYAVPSCGRSVEGLSRRLKRAVSEHQLLHDKGKSIQDLRRRFFLHHLIAEIHTAEIRATSEVSPNSKPSPNTKNHPVRFGSDDEGRYLTQETNKVETYKEQPLKTPGKKKKGKPGKRKEQEKKKRRTRSAWLDSGVTGSGLEGDHLSDTSTTSLELDSRRH</sequence>
<protein>
    <recommendedName>
        <fullName evidence="22">Parathyroid hormone-related protein</fullName>
        <shortName>PTH-rP</shortName>
        <shortName evidence="20">PTHrP</shortName>
    </recommendedName>
    <alternativeName>
        <fullName>Parathyroid hormone-like protein</fullName>
        <shortName>PLP</shortName>
    </alternativeName>
    <component>
        <recommendedName>
            <fullName>PTHrP[1-36]</fullName>
        </recommendedName>
    </component>
    <component>
        <recommendedName>
            <fullName>PTHrP[38-94]</fullName>
        </recommendedName>
    </component>
    <component>
        <recommendedName>
            <fullName>Osteostatin</fullName>
        </recommendedName>
        <alternativeName>
            <fullName>PTHrP[107-139]</fullName>
        </alternativeName>
    </component>
</protein>
<organism>
    <name type="scientific">Homo sapiens</name>
    <name type="common">Human</name>
    <dbReference type="NCBI Taxonomy" id="9606"/>
    <lineage>
        <taxon>Eukaryota</taxon>
        <taxon>Metazoa</taxon>
        <taxon>Chordata</taxon>
        <taxon>Craniata</taxon>
        <taxon>Vertebrata</taxon>
        <taxon>Euteleostomi</taxon>
        <taxon>Mammalia</taxon>
        <taxon>Eutheria</taxon>
        <taxon>Euarchontoglires</taxon>
        <taxon>Primates</taxon>
        <taxon>Haplorrhini</taxon>
        <taxon>Catarrhini</taxon>
        <taxon>Hominidae</taxon>
        <taxon>Homo</taxon>
    </lineage>
</organism>
<keyword id="KW-0002">3D-structure</keyword>
<keyword id="KW-0025">Alternative splicing</keyword>
<keyword id="KW-0106">Calcium</keyword>
<keyword id="KW-0165">Cleavage on pair of basic residues</keyword>
<keyword id="KW-0963">Cytoplasm</keyword>
<keyword id="KW-0903">Direct protein sequencing</keyword>
<keyword id="KW-0225">Disease variant</keyword>
<keyword id="KW-0372">Hormone</keyword>
<keyword id="KW-0539">Nucleus</keyword>
<keyword id="KW-1267">Proteomics identification</keyword>
<keyword id="KW-1185">Reference proteome</keyword>
<keyword id="KW-0964">Secreted</keyword>
<keyword id="KW-0732">Signal</keyword>
<reference key="1">
    <citation type="journal article" date="1987" name="Science">
        <title>A parathyroid hormone-related protein implicated in malignant hypercalcemia: cloning and expression.</title>
        <authorList>
            <person name="Suva L.J."/>
            <person name="Winslow G.A."/>
            <person name="Wettenhall R.E.H."/>
            <person name="Hammonds R.G."/>
            <person name="Moseley J.M."/>
            <person name="Diefenbach-Jagger H."/>
            <person name="Rodda C.P."/>
            <person name="Kemp B.E."/>
            <person name="Rodriguez H."/>
            <person name="Chen E.Y."/>
            <person name="Hudson P.J."/>
            <person name="Martin T.J."/>
            <person name="Wood W.I."/>
        </authorList>
    </citation>
    <scope>NUCLEOTIDE SEQUENCE [GENOMIC DNA]</scope>
    <scope>PARTIAL PROTEIN SEQUENCE</scope>
    <scope>FUNCTION</scope>
    <scope>SUBCELLULAR LOCATION</scope>
</reference>
<reference key="2">
    <citation type="journal article" date="1988" name="Proc. Natl. Acad. Sci. U.S.A.">
        <title>Identification of a cDNA encoding a parathyroid hormone-like peptide from a human tumor associated with humoral hypercalcemia of malignancy.</title>
        <authorList>
            <person name="Mangin M."/>
            <person name="Webb A.C."/>
            <person name="Dreyer B.E."/>
            <person name="Posillico J.T."/>
            <person name="Ikeda K."/>
            <person name="Weir E.C."/>
            <person name="Stewart A.F."/>
            <person name="Bander N.H."/>
            <person name="Milstone L."/>
            <person name="Barton D.E."/>
            <person name="Francke U."/>
            <person name="Broadus A.E."/>
        </authorList>
    </citation>
    <scope>NUCLEOTIDE SEQUENCE [MRNA]</scope>
</reference>
<reference key="3">
    <citation type="journal article" date="1989" name="J. Biol. Chem.">
        <title>Characterization of the human parathyroid hormone-like peptide gene. Functional and evolutionary aspects.</title>
        <authorList>
            <person name="Yasuda T."/>
            <person name="Banville D."/>
            <person name="Hendy G.N."/>
            <person name="Goltzman D."/>
        </authorList>
    </citation>
    <scope>NUCLEOTIDE SEQUENCE [GENOMIC DNA]</scope>
</reference>
<reference key="4">
    <citation type="journal article" date="1988" name="Proc. Natl. Acad. Sci. U.S.A.">
        <title>Human renal carcinoma expresses two messages encoding a parathyroid hormone-like peptide: evidence for the alternative splicing of a single-copy gene.</title>
        <authorList>
            <person name="Thiede M.A."/>
            <person name="Strewler G.J."/>
            <person name="Nissenson R.A."/>
            <person name="Rosenblatt M."/>
            <person name="Rodan G.A."/>
        </authorList>
    </citation>
    <scope>NUCLEOTIDE SEQUENCE [MRNA] (ISOFORM 2)</scope>
</reference>
<reference key="5">
    <citation type="submission" date="2004-06" db="EMBL/GenBank/DDBJ databases">
        <title>Cloning of human full open reading frames in Gateway(TM) system entry vector (pDONR201).</title>
        <authorList>
            <person name="Ebert L."/>
            <person name="Schick M."/>
            <person name="Neubert P."/>
            <person name="Schatten R."/>
            <person name="Henze S."/>
            <person name="Korn B."/>
        </authorList>
    </citation>
    <scope>NUCLEOTIDE SEQUENCE [LARGE SCALE MRNA] (ISOFORM 1)</scope>
</reference>
<reference key="6">
    <citation type="submission" date="2005-07" db="EMBL/GenBank/DDBJ databases">
        <authorList>
            <person name="Mural R.J."/>
            <person name="Istrail S."/>
            <person name="Sutton G.G."/>
            <person name="Florea L."/>
            <person name="Halpern A.L."/>
            <person name="Mobarry C.M."/>
            <person name="Lippert R."/>
            <person name="Walenz B."/>
            <person name="Shatkay H."/>
            <person name="Dew I."/>
            <person name="Miller J.R."/>
            <person name="Flanigan M.J."/>
            <person name="Edwards N.J."/>
            <person name="Bolanos R."/>
            <person name="Fasulo D."/>
            <person name="Halldorsson B.V."/>
            <person name="Hannenhalli S."/>
            <person name="Turner R."/>
            <person name="Yooseph S."/>
            <person name="Lu F."/>
            <person name="Nusskern D.R."/>
            <person name="Shue B.C."/>
            <person name="Zheng X.H."/>
            <person name="Zhong F."/>
            <person name="Delcher A.L."/>
            <person name="Huson D.H."/>
            <person name="Kravitz S.A."/>
            <person name="Mouchard L."/>
            <person name="Reinert K."/>
            <person name="Remington K.A."/>
            <person name="Clark A.G."/>
            <person name="Waterman M.S."/>
            <person name="Eichler E.E."/>
            <person name="Adams M.D."/>
            <person name="Hunkapiller M.W."/>
            <person name="Myers E.W."/>
            <person name="Venter J.C."/>
        </authorList>
    </citation>
    <scope>NUCLEOTIDE SEQUENCE [LARGE SCALE GENOMIC DNA]</scope>
</reference>
<reference key="7">
    <citation type="journal article" date="2004" name="Genome Res.">
        <title>The status, quality, and expansion of the NIH full-length cDNA project: the Mammalian Gene Collection (MGC).</title>
        <authorList>
            <consortium name="The MGC Project Team"/>
        </authorList>
    </citation>
    <scope>NUCLEOTIDE SEQUENCE [LARGE SCALE MRNA] (ISOFORM 2)</scope>
    <source>
        <tissue>Brain</tissue>
    </source>
</reference>
<reference key="8">
    <citation type="journal article" date="1989" name="Gene">
        <title>Structure of the 5' flanking region of the gene encoding human parathyroid-hormone-related protein (PTHrP).</title>
        <authorList>
            <person name="Suva L.J."/>
            <person name="Mather K.A."/>
            <person name="Gillespie M.T."/>
            <person name="Webb G.C."/>
            <person name="Ng K.W."/>
            <person name="Winslow G.A."/>
            <person name="Wood W.I."/>
            <person name="Martin T.J."/>
            <person name="Hudson P.J."/>
        </authorList>
    </citation>
    <scope>NUCLEOTIDE SEQUENCE OF 1-33</scope>
    <source>
        <tissue>Liver</tissue>
    </source>
</reference>
<reference key="9">
    <citation type="journal article" date="1987" name="Proc. Natl. Acad. Sci. U.S.A.">
        <title>Parathyroid hormone-related protein purified from a human lung cancer cell line.</title>
        <authorList>
            <person name="Moseley J.M."/>
            <person name="Kubota M."/>
            <person name="Diefenbach-Jagger H."/>
            <person name="Wettenhall R.E.H."/>
            <person name="Kemp B.E."/>
            <person name="Suva L.J."/>
            <person name="Rodda C.P."/>
            <person name="Ebeling P.R."/>
            <person name="Hudson P.J."/>
            <person name="Zajac J.D."/>
            <person name="Martin T.J."/>
        </authorList>
    </citation>
    <scope>PROTEIN SEQUENCE OF 37-52</scope>
</reference>
<reference key="10">
    <citation type="journal article" date="1989" name="Proc. Natl. Acad. Sci. U.S.A.">
        <title>Isolation and characterization of the human parathyroid hormone-like peptide gene.</title>
        <authorList>
            <person name="Mangin M."/>
            <person name="Ikeda K."/>
            <person name="Dreyer B.E."/>
            <person name="Broadus A.E."/>
        </authorList>
    </citation>
    <scope>ALTERNATIVE SPLICING (ISOFORM 3)</scope>
</reference>
<reference key="11">
    <citation type="journal article" date="1991" name="Endocrinology">
        <title>A carboxyl-terminal peptide from the parathyroid hormone-related protein inhibits bone resorption by osteoclasts.</title>
        <authorList>
            <person name="Fenton A.J."/>
            <person name="Kemp B.E."/>
            <person name="Kent G.N."/>
            <person name="Moseley J.M."/>
            <person name="Zheng M.H."/>
            <person name="Rowe D.J."/>
            <person name="Britto J.M."/>
            <person name="Martin T.J."/>
            <person name="Nicholson G.C."/>
        </authorList>
    </citation>
    <scope>CHARACTERIZATION OF OSTEOSTATIN ACTIVITY</scope>
</reference>
<reference key="12">
    <citation type="journal article" date="1991" name="Endocrinology">
        <title>A potent inhibitor of osteoclastic bone resorption within a highly conserved pentapeptide region of parathyroid hormone-related protein; PTHrP107-111.</title>
        <authorList>
            <person name="Fenton A.J."/>
            <person name="Kemp B.E."/>
            <person name="Hammonds R.G."/>
            <person name="Mitchelhill K."/>
            <person name="Moseley J.M."/>
            <person name="Martin T.J."/>
            <person name="Nicholson G.C."/>
        </authorList>
    </citation>
    <scope>CHARACTERIZATION OF OSTEOSTATIN ACTIVITY</scope>
</reference>
<reference key="13">
    <citation type="journal article" date="1997" name="J. Bone Miner. Res.">
        <title>C-terminal parathyroid hormone-related protein inhibits proliferation and differentiation of human osteoblast-like cells.</title>
        <authorList>
            <person name="Martinez M.E."/>
            <person name="Garcia-Ocana A."/>
            <person name="Sanchez M."/>
            <person name="Medina S."/>
            <person name="del Campo T."/>
            <person name="Valin A."/>
            <person name="Sanchez-Cabezudo M.J."/>
            <person name="Esbrit P."/>
        </authorList>
    </citation>
    <scope>CHARACTERIZATION OF OSTEOSTATIN ACTIVITY</scope>
</reference>
<reference key="14">
    <citation type="journal article" date="1997" name="Endocrinology">
        <title>Parathyroid hormone-related protein-(107-139) inhibits bone resorption in vivo.</title>
        <authorList>
            <person name="Cornish J."/>
            <person name="Callon K.E."/>
            <person name="Nicholson G.C."/>
            <person name="Reid I.R."/>
        </authorList>
    </citation>
    <scope>CHARACTERIZATION OF OSTEOSTATIN ACTIVITY</scope>
</reference>
<reference key="15">
    <citation type="journal article" date="2003" name="Vitam. Horm.">
        <title>Parathyroid hormone-related protein (PTHrP): a nucleocytoplasmic shuttling protein with distinct paracrine and intracrine roles.</title>
        <authorList>
            <person name="Jans D.A."/>
            <person name="Thomas R.J."/>
            <person name="Gillespie M.T."/>
        </authorList>
    </citation>
    <scope>SUBCELLULAR LOCATION</scope>
    <scope>NUCLEOCYTOPLASMIC SHUTTLING</scope>
</reference>
<reference key="16">
    <citation type="journal article" date="2001" name="Biochem. Biophys. Res. Commun.">
        <title>Molecular dissection of the importin beta1-recognized nuclear targeting signal of parathyroid hormone-related protein.</title>
        <authorList>
            <person name="Lam M.H."/>
            <person name="Hu W."/>
            <person name="Xiao C.Y."/>
            <person name="Gillespie M.T."/>
            <person name="Jans D.A."/>
        </authorList>
    </citation>
    <scope>NUCLEAR LOCALIZATION SIGNAL</scope>
</reference>
<reference key="17">
    <citation type="journal article" date="2003" name="Endocrinology">
        <title>Minireview: parathyroid hormone-related protein as an intracrine factor -- trafficking mechanisms and functional consequences.</title>
        <authorList>
            <person name="Fiaschi-Taesch N.M."/>
            <person name="Stewart A.F."/>
        </authorList>
    </citation>
    <scope>REVIEW</scope>
</reference>
<reference key="18">
    <citation type="journal article" date="2010" name="Cancer Lett.">
        <title>PTHrP promotes colon cancer cell migration and invasion in an integrin alpha6beta4-dependent manner through activation of Rac1.</title>
        <authorList>
            <person name="Mula R.V."/>
            <person name="Bhatia V."/>
            <person name="Falzon M."/>
        </authorList>
    </citation>
    <scope>FUNCTION</scope>
</reference>
<reference key="19">
    <citation type="journal article" date="1999" name="FEBS Lett.">
        <title>The structure of human parathyroid hormone-related protein(1-34) in near-physiological solution.</title>
        <authorList>
            <person name="Weidler M."/>
            <person name="Marx U.C."/>
            <person name="Seidel G."/>
            <person name="Schafer W."/>
            <person name="Hoffmann E."/>
            <person name="Esswein A."/>
            <person name="Rosch P."/>
        </authorList>
    </citation>
    <scope>STRUCTURE BY NMR OF 37-70</scope>
</reference>
<reference key="20">
    <citation type="journal article" date="2002" name="Mol. Cell">
        <title>Molecular basis for the recognition of a nonclassical nuclear localization signal by importin beta.</title>
        <authorList>
            <person name="Cingolani G."/>
            <person name="Bednenko J."/>
            <person name="Gillespie M.T."/>
            <person name="Gerace L."/>
        </authorList>
    </citation>
    <scope>X-RAY CRYSTALLOGRAPHY (2.9 ANGSTROMS) OF 103-130</scope>
</reference>
<reference key="21">
    <citation type="journal article" date="2009" name="J. Biol. Chem.">
        <title>Structural basis for parathyroid hormone-related protein binding to the parathyroid hormone receptor and design of conformation-selective peptides.</title>
        <authorList>
            <person name="Pioszak A.A."/>
            <person name="Parker N.R."/>
            <person name="Gardella T.J."/>
            <person name="Xu H.E."/>
        </authorList>
    </citation>
    <scope>X-RAY CRYSTALLOGRAPHY (1.94 ANGSTROMS) OF 48-70 IN COMPLEX WITH PTH1R</scope>
    <scope>FUNCTION</scope>
    <scope>INTERACTION WITH PTH1R</scope>
    <scope>MUTAGENESIS OF ARG-57; PHE-59; LEU-60; LEU-63; ILE-64 AND HIS-68</scope>
</reference>
<reference evidence="25" key="22">
    <citation type="journal article" date="2022" name="Mol. Cell">
        <title>Endogenous ligand recognition and structural transition of a human PTH receptor.</title>
        <authorList>
            <person name="Kobayashi K."/>
            <person name="Kawakami K."/>
            <person name="Kusakizako T."/>
            <person name="Miyauchi H."/>
            <person name="Tomita A."/>
            <person name="Kobayashi K."/>
            <person name="Shihoya W."/>
            <person name="Yamashita K."/>
            <person name="Nishizawa T."/>
            <person name="Kato H.E."/>
            <person name="Inoue A."/>
            <person name="Nureki O."/>
        </authorList>
    </citation>
    <scope>STRUCTURE BY ELECTRON MICROSCOPY (3.2 ANGSTROMS) OF 37-72 IN COMPLEX WITH PTH1R; GNAS; GNB1 AND GNG2</scope>
    <scope>FUNCTION</scope>
    <scope>INTERACTION WITH PTH1R</scope>
</reference>
<reference key="23">
    <citation type="journal article" date="2006" name="Science">
        <title>The consensus coding sequences of human breast and colorectal cancers.</title>
        <authorList>
            <person name="Sjoeblom T."/>
            <person name="Jones S."/>
            <person name="Wood L.D."/>
            <person name="Parsons D.W."/>
            <person name="Lin J."/>
            <person name="Barber T.D."/>
            <person name="Mandelker D."/>
            <person name="Leary R.J."/>
            <person name="Ptak J."/>
            <person name="Silliman N."/>
            <person name="Szabo S."/>
            <person name="Buckhaults P."/>
            <person name="Farrell C."/>
            <person name="Meeh P."/>
            <person name="Markowitz S.D."/>
            <person name="Willis J."/>
            <person name="Dawson D."/>
            <person name="Willson J.K.V."/>
            <person name="Gazdar A.F."/>
            <person name="Hartigan J."/>
            <person name="Wu L."/>
            <person name="Liu C."/>
            <person name="Parmigiani G."/>
            <person name="Park B.H."/>
            <person name="Bachman K.E."/>
            <person name="Papadopoulos N."/>
            <person name="Vogelstein B."/>
            <person name="Kinzler K.W."/>
            <person name="Velculescu V.E."/>
        </authorList>
    </citation>
    <scope>VARIANT [LARGE SCALE ANALYSIS] THR-169</scope>
</reference>
<reference key="24">
    <citation type="journal article" date="2010" name="Am. J. Hum. Genet.">
        <title>Deletion and point mutations of PTHLH cause brachydactyly type E.</title>
        <authorList>
            <person name="Klopocki E."/>
            <person name="Hennig B.P."/>
            <person name="Dathe K."/>
            <person name="Koll R."/>
            <person name="de Ravel T."/>
            <person name="Baten E."/>
            <person name="Blom E."/>
            <person name="Gillerot Y."/>
            <person name="Weigel J.F."/>
            <person name="Krueger G."/>
            <person name="Hiort O."/>
            <person name="Seemann P."/>
            <person name="Mundlos S."/>
        </authorList>
    </citation>
    <scope>VARIANTS BDE2 PRO-44 AND PRO-60</scope>
</reference>
<gene>
    <name evidence="19 24" type="primary">PTHLH</name>
    <name evidence="20" type="synonym">PTHRP</name>
</gene>
<evidence type="ECO:0000250" key="1">
    <source>
        <dbReference type="UniProtKB" id="P22858"/>
    </source>
</evidence>
<evidence type="ECO:0000255" key="2"/>
<evidence type="ECO:0000256" key="3">
    <source>
        <dbReference type="SAM" id="MobiDB-lite"/>
    </source>
</evidence>
<evidence type="ECO:0000269" key="4">
    <source>
    </source>
</evidence>
<evidence type="ECO:0000269" key="5">
    <source>
    </source>
</evidence>
<evidence type="ECO:0000269" key="6">
    <source>
    </source>
</evidence>
<evidence type="ECO:0000269" key="7">
    <source>
    </source>
</evidence>
<evidence type="ECO:0000269" key="8">
    <source>
    </source>
</evidence>
<evidence type="ECO:0000269" key="9">
    <source>
    </source>
</evidence>
<evidence type="ECO:0000269" key="10">
    <source>
    </source>
</evidence>
<evidence type="ECO:0000269" key="11">
    <source>
    </source>
</evidence>
<evidence type="ECO:0000269" key="12">
    <source>
    </source>
</evidence>
<evidence type="ECO:0000269" key="13">
    <source>
    </source>
</evidence>
<evidence type="ECO:0000269" key="14">
    <source>
    </source>
</evidence>
<evidence type="ECO:0000269" key="15">
    <source>
    </source>
</evidence>
<evidence type="ECO:0000269" key="16">
    <source>
    </source>
</evidence>
<evidence type="ECO:0000303" key="17">
    <source>
    </source>
</evidence>
<evidence type="ECO:0000303" key="18">
    <source>
    </source>
</evidence>
<evidence type="ECO:0000303" key="19">
    <source>
    </source>
</evidence>
<evidence type="ECO:0000303" key="20">
    <source>
    </source>
</evidence>
<evidence type="ECO:0000303" key="21">
    <source>
    </source>
</evidence>
<evidence type="ECO:0000303" key="22">
    <source>
    </source>
</evidence>
<evidence type="ECO:0000305" key="23"/>
<evidence type="ECO:0000312" key="24">
    <source>
        <dbReference type="HGNC" id="HGNC:9607"/>
    </source>
</evidence>
<evidence type="ECO:0007744" key="25">
    <source>
        <dbReference type="PDB" id="7VVJ"/>
    </source>
</evidence>
<evidence type="ECO:0007829" key="26">
    <source>
        <dbReference type="PDB" id="1M5N"/>
    </source>
</evidence>
<evidence type="ECO:0007829" key="27">
    <source>
        <dbReference type="PDB" id="7UZO"/>
    </source>
</evidence>
<evidence type="ECO:0007829" key="28">
    <source>
        <dbReference type="PDB" id="8HAF"/>
    </source>
</evidence>
<name>PTHR_HUMAN</name>